<protein>
    <recommendedName>
        <fullName evidence="1">Large ribosomal subunit protein uL18</fullName>
    </recommendedName>
    <alternativeName>
        <fullName evidence="2">50S ribosomal protein L18</fullName>
    </alternativeName>
</protein>
<sequence>MNKKDARLRRARQTRAKIAEMKVNRLTVFRTNSHIYAQVFSECGTKVLASASTAEVEVRKELDGKGATAAAATVVGKRIAEKAKAAGVETVAFDRAGFRFHGRVKALADAAREAGLKF</sequence>
<comment type="function">
    <text evidence="1">This is one of the proteins that bind and probably mediate the attachment of the 5S RNA into the large ribosomal subunit, where it forms part of the central protuberance.</text>
</comment>
<comment type="subunit">
    <text evidence="1">Part of the 50S ribosomal subunit; part of the 5S rRNA/L5/L18/L25 subcomplex. Contacts the 5S and 23S rRNAs.</text>
</comment>
<comment type="similarity">
    <text evidence="1">Belongs to the universal ribosomal protein uL18 family.</text>
</comment>
<name>RL18_CUPPJ</name>
<feature type="chain" id="PRO_0000251351" description="Large ribosomal subunit protein uL18">
    <location>
        <begin position="1"/>
        <end position="118"/>
    </location>
</feature>
<organism>
    <name type="scientific">Cupriavidus pinatubonensis (strain JMP 134 / LMG 1197)</name>
    <name type="common">Cupriavidus necator (strain JMP 134)</name>
    <dbReference type="NCBI Taxonomy" id="264198"/>
    <lineage>
        <taxon>Bacteria</taxon>
        <taxon>Pseudomonadati</taxon>
        <taxon>Pseudomonadota</taxon>
        <taxon>Betaproteobacteria</taxon>
        <taxon>Burkholderiales</taxon>
        <taxon>Burkholderiaceae</taxon>
        <taxon>Cupriavidus</taxon>
    </lineage>
</organism>
<accession>Q46WG0</accession>
<reference key="1">
    <citation type="journal article" date="2010" name="PLoS ONE">
        <title>The complete multipartite genome sequence of Cupriavidus necator JMP134, a versatile pollutant degrader.</title>
        <authorList>
            <person name="Lykidis A."/>
            <person name="Perez-Pantoja D."/>
            <person name="Ledger T."/>
            <person name="Mavromatis K."/>
            <person name="Anderson I.J."/>
            <person name="Ivanova N.N."/>
            <person name="Hooper S.D."/>
            <person name="Lapidus A."/>
            <person name="Lucas S."/>
            <person name="Gonzalez B."/>
            <person name="Kyrpides N.C."/>
        </authorList>
    </citation>
    <scope>NUCLEOTIDE SEQUENCE [LARGE SCALE GENOMIC DNA]</scope>
    <source>
        <strain>JMP134 / LMG 1197</strain>
    </source>
</reference>
<keyword id="KW-0687">Ribonucleoprotein</keyword>
<keyword id="KW-0689">Ribosomal protein</keyword>
<keyword id="KW-0694">RNA-binding</keyword>
<keyword id="KW-0699">rRNA-binding</keyword>
<gene>
    <name evidence="1" type="primary">rplR</name>
    <name type="ordered locus">Reut_A3163</name>
</gene>
<proteinExistence type="inferred from homology"/>
<dbReference type="EMBL" id="CP000090">
    <property type="protein sequence ID" value="AAZ62523.1"/>
    <property type="molecule type" value="Genomic_DNA"/>
</dbReference>
<dbReference type="SMR" id="Q46WG0"/>
<dbReference type="STRING" id="264198.Reut_A3163"/>
<dbReference type="KEGG" id="reu:Reut_A3163"/>
<dbReference type="eggNOG" id="COG0256">
    <property type="taxonomic scope" value="Bacteria"/>
</dbReference>
<dbReference type="HOGENOM" id="CLU_098841_0_1_4"/>
<dbReference type="OrthoDB" id="9810939at2"/>
<dbReference type="GO" id="GO:0022625">
    <property type="term" value="C:cytosolic large ribosomal subunit"/>
    <property type="evidence" value="ECO:0007669"/>
    <property type="project" value="TreeGrafter"/>
</dbReference>
<dbReference type="GO" id="GO:0008097">
    <property type="term" value="F:5S rRNA binding"/>
    <property type="evidence" value="ECO:0007669"/>
    <property type="project" value="TreeGrafter"/>
</dbReference>
<dbReference type="GO" id="GO:0003735">
    <property type="term" value="F:structural constituent of ribosome"/>
    <property type="evidence" value="ECO:0007669"/>
    <property type="project" value="InterPro"/>
</dbReference>
<dbReference type="GO" id="GO:0006412">
    <property type="term" value="P:translation"/>
    <property type="evidence" value="ECO:0007669"/>
    <property type="project" value="UniProtKB-UniRule"/>
</dbReference>
<dbReference type="CDD" id="cd00432">
    <property type="entry name" value="Ribosomal_L18_L5e"/>
    <property type="match status" value="1"/>
</dbReference>
<dbReference type="FunFam" id="3.30.420.100:FF:000001">
    <property type="entry name" value="50S ribosomal protein L18"/>
    <property type="match status" value="1"/>
</dbReference>
<dbReference type="Gene3D" id="3.30.420.100">
    <property type="match status" value="1"/>
</dbReference>
<dbReference type="HAMAP" id="MF_01337_B">
    <property type="entry name" value="Ribosomal_uL18_B"/>
    <property type="match status" value="1"/>
</dbReference>
<dbReference type="InterPro" id="IPR004389">
    <property type="entry name" value="Ribosomal_uL18_bac-type"/>
</dbReference>
<dbReference type="InterPro" id="IPR005484">
    <property type="entry name" value="Ribosomal_uL18_bac/euk"/>
</dbReference>
<dbReference type="NCBIfam" id="TIGR00060">
    <property type="entry name" value="L18_bact"/>
    <property type="match status" value="1"/>
</dbReference>
<dbReference type="PANTHER" id="PTHR12899">
    <property type="entry name" value="39S RIBOSOMAL PROTEIN L18, MITOCHONDRIAL"/>
    <property type="match status" value="1"/>
</dbReference>
<dbReference type="PANTHER" id="PTHR12899:SF3">
    <property type="entry name" value="LARGE RIBOSOMAL SUBUNIT PROTEIN UL18M"/>
    <property type="match status" value="1"/>
</dbReference>
<dbReference type="Pfam" id="PF00861">
    <property type="entry name" value="Ribosomal_L18p"/>
    <property type="match status" value="1"/>
</dbReference>
<dbReference type="SUPFAM" id="SSF53137">
    <property type="entry name" value="Translational machinery components"/>
    <property type="match status" value="1"/>
</dbReference>
<evidence type="ECO:0000255" key="1">
    <source>
        <dbReference type="HAMAP-Rule" id="MF_01337"/>
    </source>
</evidence>
<evidence type="ECO:0000305" key="2"/>